<evidence type="ECO:0000250" key="1"/>
<evidence type="ECO:0000255" key="2">
    <source>
        <dbReference type="PROSITE-ProRule" id="PRU01126"/>
    </source>
</evidence>
<evidence type="ECO:0000269" key="3">
    <source>
    </source>
</evidence>
<evidence type="ECO:0000269" key="4">
    <source>
    </source>
</evidence>
<evidence type="ECO:0000269" key="5">
    <source>
    </source>
</evidence>
<evidence type="ECO:0000305" key="6"/>
<evidence type="ECO:0000305" key="7">
    <source>
    </source>
</evidence>
<reference key="1">
    <citation type="journal article" date="1992" name="Nature">
        <title>The complete DNA sequence of yeast chromosome III.</title>
        <authorList>
            <person name="Oliver S.G."/>
            <person name="van der Aart Q.J.M."/>
            <person name="Agostoni-Carbone M.L."/>
            <person name="Aigle M."/>
            <person name="Alberghina L."/>
            <person name="Alexandraki D."/>
            <person name="Antoine G."/>
            <person name="Anwar R."/>
            <person name="Ballesta J.P.G."/>
            <person name="Benit P."/>
            <person name="Berben G."/>
            <person name="Bergantino E."/>
            <person name="Biteau N."/>
            <person name="Bolle P.-A."/>
            <person name="Bolotin-Fukuhara M."/>
            <person name="Brown A."/>
            <person name="Brown A.J.P."/>
            <person name="Buhler J.-M."/>
            <person name="Carcano C."/>
            <person name="Carignani G."/>
            <person name="Cederberg H."/>
            <person name="Chanet R."/>
            <person name="Contreras R."/>
            <person name="Crouzet M."/>
            <person name="Daignan-Fornier B."/>
            <person name="Defoor E."/>
            <person name="Delgado M.D."/>
            <person name="Demolder J."/>
            <person name="Doira C."/>
            <person name="Dubois E."/>
            <person name="Dujon B."/>
            <person name="Duesterhoeft A."/>
            <person name="Erdmann D."/>
            <person name="Esteban M."/>
            <person name="Fabre F."/>
            <person name="Fairhead C."/>
            <person name="Faye G."/>
            <person name="Feldmann H."/>
            <person name="Fiers W."/>
            <person name="Francingues-Gaillard M.-C."/>
            <person name="Franco L."/>
            <person name="Frontali L."/>
            <person name="Fukuhara H."/>
            <person name="Fuller L.J."/>
            <person name="Galland P."/>
            <person name="Gent M.E."/>
            <person name="Gigot D."/>
            <person name="Gilliquet V."/>
            <person name="Glansdorff N."/>
            <person name="Goffeau A."/>
            <person name="Grenson M."/>
            <person name="Grisanti P."/>
            <person name="Grivell L.A."/>
            <person name="de Haan M."/>
            <person name="Haasemann M."/>
            <person name="Hatat D."/>
            <person name="Hoenicka J."/>
            <person name="Hegemann J.H."/>
            <person name="Herbert C.J."/>
            <person name="Hilger F."/>
            <person name="Hohmann S."/>
            <person name="Hollenberg C.P."/>
            <person name="Huse K."/>
            <person name="Iborra F."/>
            <person name="Indge K.J."/>
            <person name="Isono K."/>
            <person name="Jacq C."/>
            <person name="Jacquet M."/>
            <person name="James C.M."/>
            <person name="Jauniaux J.-C."/>
            <person name="Jia Y."/>
            <person name="Jimenez A."/>
            <person name="Kelly A."/>
            <person name="Kleinhans U."/>
            <person name="Kreisl P."/>
            <person name="Lanfranchi G."/>
            <person name="Lewis C."/>
            <person name="van der Linden C.G."/>
            <person name="Lucchini G."/>
            <person name="Lutzenkirchen K."/>
            <person name="Maat M.J."/>
            <person name="Mallet L."/>
            <person name="Mannhaupt G."/>
            <person name="Martegani E."/>
            <person name="Mathieu A."/>
            <person name="Maurer C.T.C."/>
            <person name="McConnell D."/>
            <person name="McKee R.A."/>
            <person name="Messenguy F."/>
            <person name="Mewes H.-W."/>
            <person name="Molemans F."/>
            <person name="Montague M.A."/>
            <person name="Muzi Falconi M."/>
            <person name="Navas L."/>
            <person name="Newlon C.S."/>
            <person name="Noone D."/>
            <person name="Pallier C."/>
            <person name="Panzeri L."/>
            <person name="Pearson B.M."/>
            <person name="Perea J."/>
            <person name="Philippsen P."/>
            <person name="Pierard A."/>
            <person name="Planta R.J."/>
            <person name="Plevani P."/>
            <person name="Poetsch B."/>
            <person name="Pohl F.M."/>
            <person name="Purnelle B."/>
            <person name="Ramezani Rad M."/>
            <person name="Rasmussen S.W."/>
            <person name="Raynal A."/>
            <person name="Remacha M.A."/>
            <person name="Richterich P."/>
            <person name="Roberts A.B."/>
            <person name="Rodriguez F."/>
            <person name="Sanz E."/>
            <person name="Schaaff-Gerstenschlaeger I."/>
            <person name="Scherens B."/>
            <person name="Schweitzer B."/>
            <person name="Shu Y."/>
            <person name="Skala J."/>
            <person name="Slonimski P.P."/>
            <person name="Sor F."/>
            <person name="Soustelle C."/>
            <person name="Spiegelberg R."/>
            <person name="Stateva L.I."/>
            <person name="Steensma H.Y."/>
            <person name="Steiner S."/>
            <person name="Thierry A."/>
            <person name="Thireos G."/>
            <person name="Tzermia M."/>
            <person name="Urrestarazu L.A."/>
            <person name="Valle G."/>
            <person name="Vetter I."/>
            <person name="van Vliet-Reedijk J.C."/>
            <person name="Voet M."/>
            <person name="Volckaert G."/>
            <person name="Vreken P."/>
            <person name="Wang H."/>
            <person name="Warmington J.R."/>
            <person name="von Wettstein D."/>
            <person name="Wicksteed B.L."/>
            <person name="Wilson C."/>
            <person name="Wurst H."/>
            <person name="Xu G."/>
            <person name="Yoshikawa A."/>
            <person name="Zimmermann F.K."/>
            <person name="Sgouros J.G."/>
        </authorList>
    </citation>
    <scope>NUCLEOTIDE SEQUENCE [LARGE SCALE GENOMIC DNA]</scope>
    <source>
        <strain>ATCC 204508 / S288c</strain>
    </source>
</reference>
<reference key="2">
    <citation type="journal article" date="2014" name="G3 (Bethesda)">
        <title>The reference genome sequence of Saccharomyces cerevisiae: Then and now.</title>
        <authorList>
            <person name="Engel S.R."/>
            <person name="Dietrich F.S."/>
            <person name="Fisk D.G."/>
            <person name="Binkley G."/>
            <person name="Balakrishnan R."/>
            <person name="Costanzo M.C."/>
            <person name="Dwight S.S."/>
            <person name="Hitz B.C."/>
            <person name="Karra K."/>
            <person name="Nash R.S."/>
            <person name="Weng S."/>
            <person name="Wong E.D."/>
            <person name="Lloyd P."/>
            <person name="Skrzypek M.S."/>
            <person name="Miyasato S.R."/>
            <person name="Simison M."/>
            <person name="Cherry J.M."/>
        </authorList>
    </citation>
    <scope>GENOME REANNOTATION</scope>
    <source>
        <strain>ATCC 204508 / S288c</strain>
    </source>
</reference>
<reference key="3">
    <citation type="journal article" date="2003" name="Nature">
        <title>Global analysis of protein expression in yeast.</title>
        <authorList>
            <person name="Ghaemmaghami S."/>
            <person name="Huh W.-K."/>
            <person name="Bower K."/>
            <person name="Howson R.W."/>
            <person name="Belle A."/>
            <person name="Dephoure N."/>
            <person name="O'Shea E.K."/>
            <person name="Weissman J.S."/>
        </authorList>
    </citation>
    <scope>LEVEL OF PROTEIN EXPRESSION [LARGE SCALE ANALYSIS]</scope>
</reference>
<reference key="4">
    <citation type="journal article" date="2004" name="Proc. Natl. Acad. Sci. U.S.A.">
        <title>Methionine sulfoxide reductase regulation of yeast lifespan reveals reactive oxygen species-dependent and -independent components of aging.</title>
        <authorList>
            <person name="Koc A."/>
            <person name="Gasch A.P."/>
            <person name="Rutherford J.C."/>
            <person name="Kim H.Y."/>
            <person name="Gladyshev V.N."/>
        </authorList>
    </citation>
    <scope>FUNCTION</scope>
    <scope>CATALYTIC ACTIVITY</scope>
</reference>
<reference key="5">
    <citation type="journal article" date="2009" name="Microbiology">
        <title>Methionine sulphoxide reductases protect iron-sulphur clusters from oxidative inactivation in yeast.</title>
        <authorList>
            <person name="Sideri T.C."/>
            <person name="Willetts S.A."/>
            <person name="Avery S.V."/>
        </authorList>
    </citation>
    <scope>FUNCTION</scope>
</reference>
<accession>P25566</accession>
<accession>D6VQY2</accession>
<name>MXR2_YEAST</name>
<gene>
    <name type="primary">MXR2</name>
    <name type="synonym">MSRB</name>
    <name type="ordered locus">YCL033C</name>
    <name type="ORF">YCL33C</name>
</gene>
<sequence>MNKWSRLYVITVRRTFPGRRNIVLTQYWNKSKKMSDESNDVKWNDALTPLQLMVLRDKATERPNTGAYLHTNESGVYHCANCDRPLYSSKAKFDARCGWPAFYEEVSPGAITYHRDNSLMPARVEICCARCGGHLGHVFEGEGWKQLLNLPKDTRHCVNSASLNLKKD</sequence>
<keyword id="KW-1015">Disulfide bond</keyword>
<keyword id="KW-0249">Electron transport</keyword>
<keyword id="KW-0479">Metal-binding</keyword>
<keyword id="KW-0560">Oxidoreductase</keyword>
<keyword id="KW-0676">Redox-active center</keyword>
<keyword id="KW-1185">Reference proteome</keyword>
<keyword id="KW-0813">Transport</keyword>
<keyword id="KW-0862">Zinc</keyword>
<organism>
    <name type="scientific">Saccharomyces cerevisiae (strain ATCC 204508 / S288c)</name>
    <name type="common">Baker's yeast</name>
    <dbReference type="NCBI Taxonomy" id="559292"/>
    <lineage>
        <taxon>Eukaryota</taxon>
        <taxon>Fungi</taxon>
        <taxon>Dikarya</taxon>
        <taxon>Ascomycota</taxon>
        <taxon>Saccharomycotina</taxon>
        <taxon>Saccharomycetes</taxon>
        <taxon>Saccharomycetales</taxon>
        <taxon>Saccharomycetaceae</taxon>
        <taxon>Saccharomyces</taxon>
    </lineage>
</organism>
<comment type="function">
    <text evidence="4 5">Methionine-R-sulfoxide reductase which catalyzes the reduction of methionine sulfoxide (MetSO) to methionine in proteins. Plays a protective role against oxidative stress by restoring activity to proteins that have been inactivated by methionine oxidation. Protects iron-sulfur clusters from oxidative inactivation along with MXR1. Involved in the regulation of lifespan.</text>
</comment>
<comment type="catalytic activity">
    <reaction evidence="4">
        <text>L-methionyl-[protein] + [thioredoxin]-disulfide + H2O = L-methionyl-(R)-S-oxide-[protein] + [thioredoxin]-dithiol</text>
        <dbReference type="Rhea" id="RHEA:24164"/>
        <dbReference type="Rhea" id="RHEA-COMP:10698"/>
        <dbReference type="Rhea" id="RHEA-COMP:10700"/>
        <dbReference type="Rhea" id="RHEA-COMP:12313"/>
        <dbReference type="Rhea" id="RHEA-COMP:12314"/>
        <dbReference type="ChEBI" id="CHEBI:15377"/>
        <dbReference type="ChEBI" id="CHEBI:16044"/>
        <dbReference type="ChEBI" id="CHEBI:29950"/>
        <dbReference type="ChEBI" id="CHEBI:45764"/>
        <dbReference type="ChEBI" id="CHEBI:50058"/>
        <dbReference type="EC" id="1.8.4.12"/>
    </reaction>
    <physiologicalReaction direction="right-to-left" evidence="7">
        <dbReference type="Rhea" id="RHEA:24166"/>
    </physiologicalReaction>
</comment>
<comment type="cofactor">
    <cofactor evidence="1">
        <name>Zn(2+)</name>
        <dbReference type="ChEBI" id="CHEBI:29105"/>
    </cofactor>
    <text evidence="1">Binds 1 zinc ion per subunit.</text>
</comment>
<comment type="miscellaneous">
    <text evidence="3">Present with 799 molecules/cell in log phase SD medium.</text>
</comment>
<comment type="similarity">
    <text evidence="6">Belongs to the MsrB Met sulfoxide reductase family.</text>
</comment>
<feature type="chain" id="PRO_0000140326" description="Peptide methionine sulfoxide reductase 2">
    <location>
        <begin position="1"/>
        <end position="168"/>
    </location>
</feature>
<feature type="domain" description="MsrB" evidence="2">
    <location>
        <begin position="40"/>
        <end position="168"/>
    </location>
</feature>
<feature type="active site" description="Nucleophile" evidence="2">
    <location>
        <position position="157"/>
    </location>
</feature>
<feature type="binding site" evidence="2">
    <location>
        <position position="79"/>
    </location>
    <ligand>
        <name>Zn(2+)</name>
        <dbReference type="ChEBI" id="CHEBI:29105"/>
    </ligand>
</feature>
<feature type="binding site" evidence="2">
    <location>
        <position position="82"/>
    </location>
    <ligand>
        <name>Zn(2+)</name>
        <dbReference type="ChEBI" id="CHEBI:29105"/>
    </ligand>
</feature>
<feature type="binding site" evidence="2">
    <location>
        <position position="128"/>
    </location>
    <ligand>
        <name>Zn(2+)</name>
        <dbReference type="ChEBI" id="CHEBI:29105"/>
    </ligand>
</feature>
<feature type="binding site" evidence="2">
    <location>
        <position position="131"/>
    </location>
    <ligand>
        <name>Zn(2+)</name>
        <dbReference type="ChEBI" id="CHEBI:29105"/>
    </ligand>
</feature>
<feature type="disulfide bond" description="Redox-active" evidence="1">
    <location>
        <begin position="97"/>
        <end position="157"/>
    </location>
</feature>
<proteinExistence type="evidence at protein level"/>
<dbReference type="EC" id="1.8.4.12" evidence="4"/>
<dbReference type="EMBL" id="X59720">
    <property type="protein sequence ID" value="CAA42383.1"/>
    <property type="molecule type" value="Genomic_DNA"/>
</dbReference>
<dbReference type="EMBL" id="BK006937">
    <property type="protein sequence ID" value="DAA07451.1"/>
    <property type="molecule type" value="Genomic_DNA"/>
</dbReference>
<dbReference type="PIR" id="S19361">
    <property type="entry name" value="S19361"/>
</dbReference>
<dbReference type="RefSeq" id="NP_009897.1">
    <property type="nucleotide sequence ID" value="NM_001178678.1"/>
</dbReference>
<dbReference type="SMR" id="P25566"/>
<dbReference type="BioGRID" id="30950">
    <property type="interactions" value="57"/>
</dbReference>
<dbReference type="DIP" id="DIP-4861N"/>
<dbReference type="FunCoup" id="P25566">
    <property type="interactions" value="397"/>
</dbReference>
<dbReference type="IntAct" id="P25566">
    <property type="interactions" value="3"/>
</dbReference>
<dbReference type="STRING" id="4932.YCL033C"/>
<dbReference type="iPTMnet" id="P25566"/>
<dbReference type="PaxDb" id="4932-YCL033C"/>
<dbReference type="PeptideAtlas" id="P25566"/>
<dbReference type="EnsemblFungi" id="YCL033C_mRNA">
    <property type="protein sequence ID" value="YCL033C"/>
    <property type="gene ID" value="YCL033C"/>
</dbReference>
<dbReference type="GeneID" id="850324"/>
<dbReference type="KEGG" id="sce:YCL033C"/>
<dbReference type="AGR" id="SGD:S000000538"/>
<dbReference type="SGD" id="S000000538">
    <property type="gene designation" value="MXR2"/>
</dbReference>
<dbReference type="VEuPathDB" id="FungiDB:YCL033C"/>
<dbReference type="eggNOG" id="KOG0856">
    <property type="taxonomic scope" value="Eukaryota"/>
</dbReference>
<dbReference type="HOGENOM" id="CLU_031040_8_1_1"/>
<dbReference type="InParanoid" id="P25566"/>
<dbReference type="OMA" id="DEQWRAE"/>
<dbReference type="OrthoDB" id="44061at2759"/>
<dbReference type="BioCyc" id="YEAST:G3O-29293-MONOMER"/>
<dbReference type="BioGRID-ORCS" id="850324">
    <property type="hits" value="4 hits in 10 CRISPR screens"/>
</dbReference>
<dbReference type="PRO" id="PR:P25566"/>
<dbReference type="Proteomes" id="UP000002311">
    <property type="component" value="Chromosome III"/>
</dbReference>
<dbReference type="RNAct" id="P25566">
    <property type="molecule type" value="protein"/>
</dbReference>
<dbReference type="GO" id="GO:0005737">
    <property type="term" value="C:cytoplasm"/>
    <property type="evidence" value="ECO:0000318"/>
    <property type="project" value="GO_Central"/>
</dbReference>
<dbReference type="GO" id="GO:0005739">
    <property type="term" value="C:mitochondrion"/>
    <property type="evidence" value="ECO:0000314"/>
    <property type="project" value="SGD"/>
</dbReference>
<dbReference type="GO" id="GO:0046872">
    <property type="term" value="F:metal ion binding"/>
    <property type="evidence" value="ECO:0007669"/>
    <property type="project" value="UniProtKB-KW"/>
</dbReference>
<dbReference type="GO" id="GO:0033743">
    <property type="term" value="F:peptide-methionine (R)-S-oxide reductase activity"/>
    <property type="evidence" value="ECO:0000314"/>
    <property type="project" value="SGD"/>
</dbReference>
<dbReference type="GO" id="GO:0034599">
    <property type="term" value="P:cellular response to oxidative stress"/>
    <property type="evidence" value="ECO:0000315"/>
    <property type="project" value="SGD"/>
</dbReference>
<dbReference type="GO" id="GO:0030091">
    <property type="term" value="P:protein repair"/>
    <property type="evidence" value="ECO:0007669"/>
    <property type="project" value="InterPro"/>
</dbReference>
<dbReference type="Gene3D" id="2.170.150.20">
    <property type="entry name" value="Peptide methionine sulfoxide reductase"/>
    <property type="match status" value="1"/>
</dbReference>
<dbReference type="InterPro" id="IPR028427">
    <property type="entry name" value="Met_Sox_Rdtase_MsrB"/>
</dbReference>
<dbReference type="InterPro" id="IPR002579">
    <property type="entry name" value="Met_Sox_Rdtase_MsrB_dom"/>
</dbReference>
<dbReference type="InterPro" id="IPR011057">
    <property type="entry name" value="Mss4-like_sf"/>
</dbReference>
<dbReference type="NCBIfam" id="TIGR00357">
    <property type="entry name" value="peptide-methionine (R)-S-oxide reductase MsrB"/>
    <property type="match status" value="1"/>
</dbReference>
<dbReference type="PANTHER" id="PTHR46081">
    <property type="entry name" value="PEPTIDE METHIONINE SULFOXIDE REDUCTASE 2"/>
    <property type="match status" value="1"/>
</dbReference>
<dbReference type="PANTHER" id="PTHR46081:SF8">
    <property type="entry name" value="PEPTIDE METHIONINE SULFOXIDE REDUCTASE 2"/>
    <property type="match status" value="1"/>
</dbReference>
<dbReference type="Pfam" id="PF01641">
    <property type="entry name" value="SelR"/>
    <property type="match status" value="1"/>
</dbReference>
<dbReference type="SUPFAM" id="SSF51316">
    <property type="entry name" value="Mss4-like"/>
    <property type="match status" value="1"/>
</dbReference>
<dbReference type="PROSITE" id="PS51790">
    <property type="entry name" value="MSRB"/>
    <property type="match status" value="1"/>
</dbReference>
<protein>
    <recommendedName>
        <fullName>Peptide methionine sulfoxide reductase 2</fullName>
        <ecNumber evidence="4">1.8.4.12</ecNumber>
    </recommendedName>
</protein>